<organism>
    <name type="scientific">Jannaschia sp. (strain CCS1)</name>
    <dbReference type="NCBI Taxonomy" id="290400"/>
    <lineage>
        <taxon>Bacteria</taxon>
        <taxon>Pseudomonadati</taxon>
        <taxon>Pseudomonadota</taxon>
        <taxon>Alphaproteobacteria</taxon>
        <taxon>Rhodobacterales</taxon>
        <taxon>Roseobacteraceae</taxon>
        <taxon>Jannaschia</taxon>
    </lineage>
</organism>
<evidence type="ECO:0000255" key="1">
    <source>
        <dbReference type="HAMAP-Rule" id="MF_00360"/>
    </source>
</evidence>
<evidence type="ECO:0000256" key="2">
    <source>
        <dbReference type="SAM" id="MobiDB-lite"/>
    </source>
</evidence>
<evidence type="ECO:0000305" key="3"/>
<accession>Q28RX3</accession>
<comment type="function">
    <text evidence="1">Binds together with bS18 to 16S ribosomal RNA.</text>
</comment>
<comment type="similarity">
    <text evidence="1">Belongs to the bacterial ribosomal protein bS6 family.</text>
</comment>
<feature type="chain" id="PRO_1000005279" description="Small ribosomal subunit protein bS6">
    <location>
        <begin position="1"/>
        <end position="117"/>
    </location>
</feature>
<feature type="region of interest" description="Disordered" evidence="2">
    <location>
        <begin position="96"/>
        <end position="117"/>
    </location>
</feature>
<gene>
    <name evidence="1" type="primary">rpsF</name>
    <name type="ordered locus">Jann_1622</name>
</gene>
<keyword id="KW-1185">Reference proteome</keyword>
<keyword id="KW-0687">Ribonucleoprotein</keyword>
<keyword id="KW-0689">Ribosomal protein</keyword>
<keyword id="KW-0694">RNA-binding</keyword>
<keyword id="KW-0699">rRNA-binding</keyword>
<proteinExistence type="inferred from homology"/>
<name>RS6_JANSC</name>
<sequence>MALYEHVMIARQDLSNAQAEALNEHFGAVLADNGGTVVDTEYWGVKTMAYKINKNRKGHYSYLRTDAPSDAVQEMERLMRLHDDVMRVLTIKVDAHDEGPSVQMQKRDEREGRRERR</sequence>
<protein>
    <recommendedName>
        <fullName evidence="1">Small ribosomal subunit protein bS6</fullName>
    </recommendedName>
    <alternativeName>
        <fullName evidence="3">30S ribosomal protein S6</fullName>
    </alternativeName>
</protein>
<reference key="1">
    <citation type="submission" date="2006-02" db="EMBL/GenBank/DDBJ databases">
        <title>Complete sequence of chromosome of Jannaschia sp. CCS1.</title>
        <authorList>
            <consortium name="US DOE Joint Genome Institute"/>
            <person name="Copeland A."/>
            <person name="Lucas S."/>
            <person name="Lapidus A."/>
            <person name="Barry K."/>
            <person name="Detter J.C."/>
            <person name="Glavina del Rio T."/>
            <person name="Hammon N."/>
            <person name="Israni S."/>
            <person name="Pitluck S."/>
            <person name="Brettin T."/>
            <person name="Bruce D."/>
            <person name="Han C."/>
            <person name="Tapia R."/>
            <person name="Gilna P."/>
            <person name="Chertkov O."/>
            <person name="Saunders E."/>
            <person name="Schmutz J."/>
            <person name="Larimer F."/>
            <person name="Land M."/>
            <person name="Kyrpides N."/>
            <person name="Lykidis A."/>
            <person name="Moran M.A."/>
            <person name="Belas R."/>
            <person name="Ye W."/>
            <person name="Buchan A."/>
            <person name="Gonzalez J.M."/>
            <person name="Schell M.A."/>
            <person name="Richardson P."/>
        </authorList>
    </citation>
    <scope>NUCLEOTIDE SEQUENCE [LARGE SCALE GENOMIC DNA]</scope>
    <source>
        <strain>CCS1</strain>
    </source>
</reference>
<dbReference type="EMBL" id="CP000264">
    <property type="protein sequence ID" value="ABD54539.1"/>
    <property type="molecule type" value="Genomic_DNA"/>
</dbReference>
<dbReference type="RefSeq" id="WP_011454744.1">
    <property type="nucleotide sequence ID" value="NC_007802.1"/>
</dbReference>
<dbReference type="SMR" id="Q28RX3"/>
<dbReference type="STRING" id="290400.Jann_1622"/>
<dbReference type="KEGG" id="jan:Jann_1622"/>
<dbReference type="eggNOG" id="COG0360">
    <property type="taxonomic scope" value="Bacteria"/>
</dbReference>
<dbReference type="HOGENOM" id="CLU_113441_2_0_5"/>
<dbReference type="OrthoDB" id="9812702at2"/>
<dbReference type="Proteomes" id="UP000008326">
    <property type="component" value="Chromosome"/>
</dbReference>
<dbReference type="GO" id="GO:0022627">
    <property type="term" value="C:cytosolic small ribosomal subunit"/>
    <property type="evidence" value="ECO:0007669"/>
    <property type="project" value="TreeGrafter"/>
</dbReference>
<dbReference type="GO" id="GO:0070181">
    <property type="term" value="F:small ribosomal subunit rRNA binding"/>
    <property type="evidence" value="ECO:0007669"/>
    <property type="project" value="TreeGrafter"/>
</dbReference>
<dbReference type="GO" id="GO:0003735">
    <property type="term" value="F:structural constituent of ribosome"/>
    <property type="evidence" value="ECO:0007669"/>
    <property type="project" value="InterPro"/>
</dbReference>
<dbReference type="GO" id="GO:0006412">
    <property type="term" value="P:translation"/>
    <property type="evidence" value="ECO:0007669"/>
    <property type="project" value="UniProtKB-UniRule"/>
</dbReference>
<dbReference type="CDD" id="cd00473">
    <property type="entry name" value="bS6"/>
    <property type="match status" value="1"/>
</dbReference>
<dbReference type="Gene3D" id="3.30.70.60">
    <property type="match status" value="1"/>
</dbReference>
<dbReference type="HAMAP" id="MF_00360">
    <property type="entry name" value="Ribosomal_bS6"/>
    <property type="match status" value="1"/>
</dbReference>
<dbReference type="InterPro" id="IPR000529">
    <property type="entry name" value="Ribosomal_bS6"/>
</dbReference>
<dbReference type="InterPro" id="IPR035980">
    <property type="entry name" value="Ribosomal_bS6_sf"/>
</dbReference>
<dbReference type="InterPro" id="IPR020814">
    <property type="entry name" value="Ribosomal_S6_plastid/chlpt"/>
</dbReference>
<dbReference type="InterPro" id="IPR014717">
    <property type="entry name" value="Transl_elong_EF1B/ribsomal_bS6"/>
</dbReference>
<dbReference type="NCBIfam" id="TIGR00166">
    <property type="entry name" value="S6"/>
    <property type="match status" value="1"/>
</dbReference>
<dbReference type="PANTHER" id="PTHR21011">
    <property type="entry name" value="MITOCHONDRIAL 28S RIBOSOMAL PROTEIN S6"/>
    <property type="match status" value="1"/>
</dbReference>
<dbReference type="PANTHER" id="PTHR21011:SF1">
    <property type="entry name" value="SMALL RIBOSOMAL SUBUNIT PROTEIN BS6M"/>
    <property type="match status" value="1"/>
</dbReference>
<dbReference type="Pfam" id="PF01250">
    <property type="entry name" value="Ribosomal_S6"/>
    <property type="match status" value="1"/>
</dbReference>
<dbReference type="SUPFAM" id="SSF54995">
    <property type="entry name" value="Ribosomal protein S6"/>
    <property type="match status" value="1"/>
</dbReference>